<protein>
    <recommendedName>
        <fullName evidence="1">D-aminoacyl-tRNA deacylase</fullName>
        <shortName evidence="1">DTD</shortName>
        <ecNumber evidence="1">3.1.1.96</ecNumber>
    </recommendedName>
    <alternativeName>
        <fullName evidence="1">Gly-tRNA(Ala) deacylase</fullName>
    </alternativeName>
</protein>
<sequence>MIALIQRVSEAKVVVDGATIGEIDRGLLVLLGVEREDNIEKMQKLATKVMSYRVFSDENGKMNLNLEQAGGSLLVVSQFTLAADTGRGLRPSFSGAGTPEQARELYEAFIDFCKSKGVNTQTGQFAADMKVSLVNDGPVTFNLQV</sequence>
<name>DTD_SHEHH</name>
<gene>
    <name evidence="1" type="primary">dtd</name>
    <name type="ordered locus">Shal_0363</name>
</gene>
<reference key="1">
    <citation type="submission" date="2008-01" db="EMBL/GenBank/DDBJ databases">
        <title>Complete sequence of Shewanella halifaxensis HAW-EB4.</title>
        <authorList>
            <consortium name="US DOE Joint Genome Institute"/>
            <person name="Copeland A."/>
            <person name="Lucas S."/>
            <person name="Lapidus A."/>
            <person name="Glavina del Rio T."/>
            <person name="Dalin E."/>
            <person name="Tice H."/>
            <person name="Bruce D."/>
            <person name="Goodwin L."/>
            <person name="Pitluck S."/>
            <person name="Sims D."/>
            <person name="Brettin T."/>
            <person name="Detter J.C."/>
            <person name="Han C."/>
            <person name="Kuske C.R."/>
            <person name="Schmutz J."/>
            <person name="Larimer F."/>
            <person name="Land M."/>
            <person name="Hauser L."/>
            <person name="Kyrpides N."/>
            <person name="Kim E."/>
            <person name="Zhao J.-S."/>
            <person name="Richardson P."/>
        </authorList>
    </citation>
    <scope>NUCLEOTIDE SEQUENCE [LARGE SCALE GENOMIC DNA]</scope>
    <source>
        <strain>HAW-EB4</strain>
    </source>
</reference>
<proteinExistence type="inferred from homology"/>
<dbReference type="EC" id="3.1.1.96" evidence="1"/>
<dbReference type="EMBL" id="CP000931">
    <property type="protein sequence ID" value="ABZ74939.1"/>
    <property type="molecule type" value="Genomic_DNA"/>
</dbReference>
<dbReference type="RefSeq" id="WP_012275494.1">
    <property type="nucleotide sequence ID" value="NC_010334.1"/>
</dbReference>
<dbReference type="SMR" id="B0TPR8"/>
<dbReference type="STRING" id="458817.Shal_0363"/>
<dbReference type="KEGG" id="shl:Shal_0363"/>
<dbReference type="eggNOG" id="COG1490">
    <property type="taxonomic scope" value="Bacteria"/>
</dbReference>
<dbReference type="HOGENOM" id="CLU_076901_1_1_6"/>
<dbReference type="OrthoDB" id="9801395at2"/>
<dbReference type="Proteomes" id="UP000001317">
    <property type="component" value="Chromosome"/>
</dbReference>
<dbReference type="GO" id="GO:0005737">
    <property type="term" value="C:cytoplasm"/>
    <property type="evidence" value="ECO:0007669"/>
    <property type="project" value="UniProtKB-SubCell"/>
</dbReference>
<dbReference type="GO" id="GO:0051500">
    <property type="term" value="F:D-tyrosyl-tRNA(Tyr) deacylase activity"/>
    <property type="evidence" value="ECO:0007669"/>
    <property type="project" value="TreeGrafter"/>
</dbReference>
<dbReference type="GO" id="GO:0106026">
    <property type="term" value="F:Gly-tRNA(Ala) deacylase activity"/>
    <property type="evidence" value="ECO:0007669"/>
    <property type="project" value="UniProtKB-UniRule"/>
</dbReference>
<dbReference type="GO" id="GO:0043908">
    <property type="term" value="F:Ser(Gly)-tRNA(Ala) hydrolase activity"/>
    <property type="evidence" value="ECO:0007669"/>
    <property type="project" value="UniProtKB-UniRule"/>
</dbReference>
<dbReference type="GO" id="GO:0000049">
    <property type="term" value="F:tRNA binding"/>
    <property type="evidence" value="ECO:0007669"/>
    <property type="project" value="UniProtKB-UniRule"/>
</dbReference>
<dbReference type="GO" id="GO:0019478">
    <property type="term" value="P:D-amino acid catabolic process"/>
    <property type="evidence" value="ECO:0007669"/>
    <property type="project" value="UniProtKB-UniRule"/>
</dbReference>
<dbReference type="CDD" id="cd00563">
    <property type="entry name" value="Dtyr_deacylase"/>
    <property type="match status" value="1"/>
</dbReference>
<dbReference type="FunFam" id="3.50.80.10:FF:000001">
    <property type="entry name" value="D-aminoacyl-tRNA deacylase"/>
    <property type="match status" value="1"/>
</dbReference>
<dbReference type="Gene3D" id="3.50.80.10">
    <property type="entry name" value="D-tyrosyl-tRNA(Tyr) deacylase"/>
    <property type="match status" value="1"/>
</dbReference>
<dbReference type="HAMAP" id="MF_00518">
    <property type="entry name" value="Deacylase_Dtd"/>
    <property type="match status" value="1"/>
</dbReference>
<dbReference type="InterPro" id="IPR003732">
    <property type="entry name" value="Daa-tRNA_deacyls_DTD"/>
</dbReference>
<dbReference type="InterPro" id="IPR023509">
    <property type="entry name" value="DTD-like_sf"/>
</dbReference>
<dbReference type="NCBIfam" id="TIGR00256">
    <property type="entry name" value="D-aminoacyl-tRNA deacylase"/>
    <property type="match status" value="1"/>
</dbReference>
<dbReference type="PANTHER" id="PTHR10472:SF5">
    <property type="entry name" value="D-AMINOACYL-TRNA DEACYLASE 1"/>
    <property type="match status" value="1"/>
</dbReference>
<dbReference type="PANTHER" id="PTHR10472">
    <property type="entry name" value="D-TYROSYL-TRNA TYR DEACYLASE"/>
    <property type="match status" value="1"/>
</dbReference>
<dbReference type="Pfam" id="PF02580">
    <property type="entry name" value="Tyr_Deacylase"/>
    <property type="match status" value="1"/>
</dbReference>
<dbReference type="SUPFAM" id="SSF69500">
    <property type="entry name" value="DTD-like"/>
    <property type="match status" value="1"/>
</dbReference>
<organism>
    <name type="scientific">Shewanella halifaxensis (strain HAW-EB4)</name>
    <dbReference type="NCBI Taxonomy" id="458817"/>
    <lineage>
        <taxon>Bacteria</taxon>
        <taxon>Pseudomonadati</taxon>
        <taxon>Pseudomonadota</taxon>
        <taxon>Gammaproteobacteria</taxon>
        <taxon>Alteromonadales</taxon>
        <taxon>Shewanellaceae</taxon>
        <taxon>Shewanella</taxon>
    </lineage>
</organism>
<evidence type="ECO:0000255" key="1">
    <source>
        <dbReference type="HAMAP-Rule" id="MF_00518"/>
    </source>
</evidence>
<accession>B0TPR8</accession>
<feature type="chain" id="PRO_1000081666" description="D-aminoacyl-tRNA deacylase">
    <location>
        <begin position="1"/>
        <end position="145"/>
    </location>
</feature>
<feature type="short sequence motif" description="Gly-cisPro motif, important for rejection of L-amino acids" evidence="1">
    <location>
        <begin position="137"/>
        <end position="138"/>
    </location>
</feature>
<keyword id="KW-0963">Cytoplasm</keyword>
<keyword id="KW-0378">Hydrolase</keyword>
<keyword id="KW-0694">RNA-binding</keyword>
<keyword id="KW-0820">tRNA-binding</keyword>
<comment type="function">
    <text evidence="1">An aminoacyl-tRNA editing enzyme that deacylates mischarged D-aminoacyl-tRNAs. Also deacylates mischarged glycyl-tRNA(Ala), protecting cells against glycine mischarging by AlaRS. Acts via tRNA-based rather than protein-based catalysis; rejects L-amino acids rather than detecting D-amino acids in the active site. By recycling D-aminoacyl-tRNA to D-amino acids and free tRNA molecules, this enzyme counteracts the toxicity associated with the formation of D-aminoacyl-tRNA entities in vivo and helps enforce protein L-homochirality.</text>
</comment>
<comment type="catalytic activity">
    <reaction evidence="1">
        <text>glycyl-tRNA(Ala) + H2O = tRNA(Ala) + glycine + H(+)</text>
        <dbReference type="Rhea" id="RHEA:53744"/>
        <dbReference type="Rhea" id="RHEA-COMP:9657"/>
        <dbReference type="Rhea" id="RHEA-COMP:13640"/>
        <dbReference type="ChEBI" id="CHEBI:15377"/>
        <dbReference type="ChEBI" id="CHEBI:15378"/>
        <dbReference type="ChEBI" id="CHEBI:57305"/>
        <dbReference type="ChEBI" id="CHEBI:78442"/>
        <dbReference type="ChEBI" id="CHEBI:78522"/>
        <dbReference type="EC" id="3.1.1.96"/>
    </reaction>
</comment>
<comment type="catalytic activity">
    <reaction evidence="1">
        <text>a D-aminoacyl-tRNA + H2O = a tRNA + a D-alpha-amino acid + H(+)</text>
        <dbReference type="Rhea" id="RHEA:13953"/>
        <dbReference type="Rhea" id="RHEA-COMP:10123"/>
        <dbReference type="Rhea" id="RHEA-COMP:10124"/>
        <dbReference type="ChEBI" id="CHEBI:15377"/>
        <dbReference type="ChEBI" id="CHEBI:15378"/>
        <dbReference type="ChEBI" id="CHEBI:59871"/>
        <dbReference type="ChEBI" id="CHEBI:78442"/>
        <dbReference type="ChEBI" id="CHEBI:79333"/>
        <dbReference type="EC" id="3.1.1.96"/>
    </reaction>
</comment>
<comment type="subunit">
    <text evidence="1">Homodimer.</text>
</comment>
<comment type="subcellular location">
    <subcellularLocation>
        <location evidence="1">Cytoplasm</location>
    </subcellularLocation>
</comment>
<comment type="domain">
    <text evidence="1">A Gly-cisPro motif from one monomer fits into the active site of the other monomer to allow specific chiral rejection of L-amino acids.</text>
</comment>
<comment type="similarity">
    <text evidence="1">Belongs to the DTD family.</text>
</comment>